<comment type="function">
    <text evidence="1">Forms part of the ribosomal stalk which helps the ribosome interact with GTP-bound translation factors. Is thus essential for accurate translation.</text>
</comment>
<comment type="subunit">
    <text evidence="1">Homodimer. Part of the ribosomal stalk of the 50S ribosomal subunit. Forms a multimeric L10(L12)X complex, where L10 forms an elongated spine to which 2 to 4 L12 dimers bind in a sequential fashion. Binds GTP-bound translation factors.</text>
</comment>
<comment type="similarity">
    <text evidence="1">Belongs to the bacterial ribosomal protein bL12 family.</text>
</comment>
<keyword id="KW-0687">Ribonucleoprotein</keyword>
<keyword id="KW-0689">Ribosomal protein</keyword>
<proteinExistence type="inferred from homology"/>
<dbReference type="EMBL" id="CP001598">
    <property type="protein sequence ID" value="ACQ47387.1"/>
    <property type="molecule type" value="Genomic_DNA"/>
</dbReference>
<dbReference type="RefSeq" id="WP_000159736.1">
    <property type="nucleotide sequence ID" value="NC_012659.1"/>
</dbReference>
<dbReference type="SMR" id="C3P9P5"/>
<dbReference type="GeneID" id="93010953"/>
<dbReference type="KEGG" id="bai:BAA_0116"/>
<dbReference type="HOGENOM" id="CLU_086499_3_2_9"/>
<dbReference type="GO" id="GO:0022625">
    <property type="term" value="C:cytosolic large ribosomal subunit"/>
    <property type="evidence" value="ECO:0007669"/>
    <property type="project" value="TreeGrafter"/>
</dbReference>
<dbReference type="GO" id="GO:0003729">
    <property type="term" value="F:mRNA binding"/>
    <property type="evidence" value="ECO:0007669"/>
    <property type="project" value="TreeGrafter"/>
</dbReference>
<dbReference type="GO" id="GO:0003735">
    <property type="term" value="F:structural constituent of ribosome"/>
    <property type="evidence" value="ECO:0007669"/>
    <property type="project" value="InterPro"/>
</dbReference>
<dbReference type="GO" id="GO:0006412">
    <property type="term" value="P:translation"/>
    <property type="evidence" value="ECO:0007669"/>
    <property type="project" value="UniProtKB-UniRule"/>
</dbReference>
<dbReference type="CDD" id="cd00387">
    <property type="entry name" value="Ribosomal_L7_L12"/>
    <property type="match status" value="1"/>
</dbReference>
<dbReference type="FunFam" id="1.20.5.710:FF:000002">
    <property type="entry name" value="50S ribosomal protein L7/L12"/>
    <property type="match status" value="1"/>
</dbReference>
<dbReference type="FunFam" id="3.30.1390.10:FF:000001">
    <property type="entry name" value="50S ribosomal protein L7/L12"/>
    <property type="match status" value="1"/>
</dbReference>
<dbReference type="Gene3D" id="3.30.1390.10">
    <property type="match status" value="1"/>
</dbReference>
<dbReference type="Gene3D" id="1.20.5.710">
    <property type="entry name" value="Single helix bin"/>
    <property type="match status" value="1"/>
</dbReference>
<dbReference type="HAMAP" id="MF_00368">
    <property type="entry name" value="Ribosomal_bL12"/>
    <property type="match status" value="1"/>
</dbReference>
<dbReference type="InterPro" id="IPR000206">
    <property type="entry name" value="Ribosomal_bL12"/>
</dbReference>
<dbReference type="InterPro" id="IPR013823">
    <property type="entry name" value="Ribosomal_bL12_C"/>
</dbReference>
<dbReference type="InterPro" id="IPR014719">
    <property type="entry name" value="Ribosomal_bL12_C/ClpS-like"/>
</dbReference>
<dbReference type="InterPro" id="IPR008932">
    <property type="entry name" value="Ribosomal_bL12_oligo"/>
</dbReference>
<dbReference type="InterPro" id="IPR036235">
    <property type="entry name" value="Ribosomal_bL12_oligo_N_sf"/>
</dbReference>
<dbReference type="NCBIfam" id="TIGR00855">
    <property type="entry name" value="L12"/>
    <property type="match status" value="1"/>
</dbReference>
<dbReference type="PANTHER" id="PTHR45987">
    <property type="entry name" value="39S RIBOSOMAL PROTEIN L12"/>
    <property type="match status" value="1"/>
</dbReference>
<dbReference type="PANTHER" id="PTHR45987:SF4">
    <property type="entry name" value="LARGE RIBOSOMAL SUBUNIT PROTEIN BL12M"/>
    <property type="match status" value="1"/>
</dbReference>
<dbReference type="Pfam" id="PF00542">
    <property type="entry name" value="Ribosomal_L12"/>
    <property type="match status" value="1"/>
</dbReference>
<dbReference type="Pfam" id="PF16320">
    <property type="entry name" value="Ribosomal_L12_N"/>
    <property type="match status" value="1"/>
</dbReference>
<dbReference type="SUPFAM" id="SSF54736">
    <property type="entry name" value="ClpS-like"/>
    <property type="match status" value="1"/>
</dbReference>
<dbReference type="SUPFAM" id="SSF48300">
    <property type="entry name" value="Ribosomal protein L7/12, oligomerisation (N-terminal) domain"/>
    <property type="match status" value="1"/>
</dbReference>
<reference key="1">
    <citation type="submission" date="2009-04" db="EMBL/GenBank/DDBJ databases">
        <title>Genome sequence of Bacillus anthracis A0248.</title>
        <authorList>
            <person name="Dodson R.J."/>
            <person name="Munk A.C."/>
            <person name="Bruce D."/>
            <person name="Detter C."/>
            <person name="Tapia R."/>
            <person name="Sutton G."/>
            <person name="Sims D."/>
            <person name="Brettin T."/>
        </authorList>
    </citation>
    <scope>NUCLEOTIDE SEQUENCE [LARGE SCALE GENOMIC DNA]</scope>
    <source>
        <strain>A0248</strain>
    </source>
</reference>
<protein>
    <recommendedName>
        <fullName evidence="1">Large ribosomal subunit protein bL12</fullName>
    </recommendedName>
    <alternativeName>
        <fullName evidence="2">50S ribosomal protein L7/L12</fullName>
    </alternativeName>
</protein>
<feature type="chain" id="PRO_1000195767" description="Large ribosomal subunit protein bL12">
    <location>
        <begin position="1"/>
        <end position="119"/>
    </location>
</feature>
<gene>
    <name evidence="1" type="primary">rplL</name>
    <name type="ordered locus">BAA_0116</name>
</gene>
<sequence>MTKEQIIEAVKSMTVLELNDLVKAIEEEFGVTAAAPVAVAGGAGEAAAEKTEFDVELTSAGAQKIKVIKVVREITGLGLKEAKELVDNTPKVIKEAAAKEEAEEIKAKLEEVGAAVEVK</sequence>
<evidence type="ECO:0000255" key="1">
    <source>
        <dbReference type="HAMAP-Rule" id="MF_00368"/>
    </source>
</evidence>
<evidence type="ECO:0000305" key="2"/>
<organism>
    <name type="scientific">Bacillus anthracis (strain A0248)</name>
    <dbReference type="NCBI Taxonomy" id="592021"/>
    <lineage>
        <taxon>Bacteria</taxon>
        <taxon>Bacillati</taxon>
        <taxon>Bacillota</taxon>
        <taxon>Bacilli</taxon>
        <taxon>Bacillales</taxon>
        <taxon>Bacillaceae</taxon>
        <taxon>Bacillus</taxon>
        <taxon>Bacillus cereus group</taxon>
    </lineage>
</organism>
<accession>C3P9P5</accession>
<name>RL7_BACAA</name>